<feature type="signal peptide" evidence="2">
    <location>
        <begin position="1"/>
        <end position="25"/>
    </location>
</feature>
<feature type="chain" id="PRO_0000025202" description="Long-chain fatty acid transport protein">
    <location>
        <begin position="26"/>
        <end position="446"/>
    </location>
</feature>
<feature type="sequence conflict" description="In Ref. 5." evidence="3" ref="5">
    <original>ARA</original>
    <variation>RRP</variation>
    <location>
        <begin position="176"/>
        <end position="178"/>
    </location>
</feature>
<feature type="sequence conflict" description="In Ref. 1; AAA64433." evidence="3" ref="1">
    <original>A</original>
    <variation>V</variation>
    <location>
        <position position="176"/>
    </location>
</feature>
<feature type="sequence conflict" description="In Ref. 1 and 5." evidence="3" ref="1 5">
    <original>A</original>
    <variation>R</variation>
    <location>
        <position position="286"/>
    </location>
</feature>
<feature type="helix" evidence="7">
    <location>
        <begin position="35"/>
        <end position="39"/>
    </location>
</feature>
<feature type="turn" evidence="6">
    <location>
        <begin position="40"/>
        <end position="42"/>
    </location>
</feature>
<feature type="turn" evidence="7">
    <location>
        <begin position="45"/>
        <end position="47"/>
    </location>
</feature>
<feature type="helix" evidence="7">
    <location>
        <begin position="52"/>
        <end position="56"/>
    </location>
</feature>
<feature type="helix" evidence="7">
    <location>
        <begin position="59"/>
        <end position="64"/>
    </location>
</feature>
<feature type="strand" evidence="7">
    <location>
        <begin position="69"/>
        <end position="84"/>
    </location>
</feature>
<feature type="strand" evidence="4">
    <location>
        <begin position="90"/>
        <end position="92"/>
    </location>
</feature>
<feature type="strand" evidence="5">
    <location>
        <begin position="95"/>
        <end position="97"/>
    </location>
</feature>
<feature type="strand" evidence="7">
    <location>
        <begin position="102"/>
        <end position="112"/>
    </location>
</feature>
<feature type="strand" evidence="7">
    <location>
        <begin position="114"/>
        <end position="124"/>
    </location>
</feature>
<feature type="strand" evidence="7">
    <location>
        <begin position="127"/>
        <end position="132"/>
    </location>
</feature>
<feature type="turn" evidence="7">
    <location>
        <begin position="138"/>
        <end position="142"/>
    </location>
</feature>
<feature type="strand" evidence="7">
    <location>
        <begin position="144"/>
        <end position="160"/>
    </location>
</feature>
<feature type="strand" evidence="7">
    <location>
        <begin position="162"/>
        <end position="183"/>
    </location>
</feature>
<feature type="helix" evidence="7">
    <location>
        <begin position="187"/>
        <end position="197"/>
    </location>
</feature>
<feature type="helix" evidence="7">
    <location>
        <begin position="199"/>
        <end position="202"/>
    </location>
</feature>
<feature type="helix" evidence="7">
    <location>
        <begin position="204"/>
        <end position="214"/>
    </location>
</feature>
<feature type="strand" evidence="7">
    <location>
        <begin position="221"/>
        <end position="243"/>
    </location>
</feature>
<feature type="strand" evidence="7">
    <location>
        <begin position="246"/>
        <end position="253"/>
    </location>
</feature>
<feature type="strand" evidence="7">
    <location>
        <begin position="256"/>
        <end position="260"/>
    </location>
</feature>
<feature type="strand" evidence="4">
    <location>
        <begin position="263"/>
        <end position="265"/>
    </location>
</feature>
<feature type="turn" evidence="7">
    <location>
        <begin position="272"/>
        <end position="276"/>
    </location>
</feature>
<feature type="strand" evidence="7">
    <location>
        <begin position="291"/>
        <end position="296"/>
    </location>
</feature>
<feature type="strand" evidence="7">
    <location>
        <begin position="298"/>
        <end position="309"/>
    </location>
</feature>
<feature type="strand" evidence="7">
    <location>
        <begin position="312"/>
        <end position="325"/>
    </location>
</feature>
<feature type="strand" evidence="7">
    <location>
        <begin position="329"/>
        <end position="334"/>
    </location>
</feature>
<feature type="strand" evidence="7">
    <location>
        <begin position="337"/>
        <end position="342"/>
    </location>
</feature>
<feature type="strand" evidence="7">
    <location>
        <begin position="347"/>
        <end position="359"/>
    </location>
</feature>
<feature type="strand" evidence="7">
    <location>
        <begin position="361"/>
        <end position="374"/>
    </location>
</feature>
<feature type="helix" evidence="7">
    <location>
        <begin position="379"/>
        <end position="381"/>
    </location>
</feature>
<feature type="strand" evidence="6">
    <location>
        <begin position="384"/>
        <end position="386"/>
    </location>
</feature>
<feature type="strand" evidence="7">
    <location>
        <begin position="391"/>
        <end position="417"/>
    </location>
</feature>
<feature type="strand" evidence="7">
    <location>
        <begin position="420"/>
        <end position="424"/>
    </location>
</feature>
<feature type="strand" evidence="7">
    <location>
        <begin position="427"/>
        <end position="446"/>
    </location>
</feature>
<organism>
    <name type="scientific">Escherichia coli (strain K12)</name>
    <dbReference type="NCBI Taxonomy" id="83333"/>
    <lineage>
        <taxon>Bacteria</taxon>
        <taxon>Pseudomonadati</taxon>
        <taxon>Pseudomonadota</taxon>
        <taxon>Gammaproteobacteria</taxon>
        <taxon>Enterobacterales</taxon>
        <taxon>Enterobacteriaceae</taxon>
        <taxon>Escherichia</taxon>
    </lineage>
</organism>
<reference key="1">
    <citation type="journal article" date="1991" name="J. Bacteriol.">
        <title>Primary sequence of the Escherichia coli fadL gene encoding an outer membrane protein required for long-chain fatty acid transport.</title>
        <authorList>
            <person name="Black P.N."/>
        </authorList>
    </citation>
    <scope>NUCLEOTIDE SEQUENCE [GENOMIC DNA]</scope>
    <scope>PROTEIN SEQUENCE OF 26-36</scope>
</reference>
<reference key="2">
    <citation type="journal article" date="1997" name="DNA Res.">
        <title>Construction of a contiguous 874-kb sequence of the Escherichia coli-K12 genome corresponding to 50.0-68.8 min on the linkage map and analysis of its sequence features.</title>
        <authorList>
            <person name="Yamamoto Y."/>
            <person name="Aiba H."/>
            <person name="Baba T."/>
            <person name="Hayashi K."/>
            <person name="Inada T."/>
            <person name="Isono K."/>
            <person name="Itoh T."/>
            <person name="Kimura S."/>
            <person name="Kitagawa M."/>
            <person name="Makino K."/>
            <person name="Miki T."/>
            <person name="Mitsuhashi N."/>
            <person name="Mizobuchi K."/>
            <person name="Mori H."/>
            <person name="Nakade S."/>
            <person name="Nakamura Y."/>
            <person name="Nashimoto H."/>
            <person name="Oshima T."/>
            <person name="Oyama S."/>
            <person name="Saito N."/>
            <person name="Sampei G."/>
            <person name="Satoh Y."/>
            <person name="Sivasundaram S."/>
            <person name="Tagami H."/>
            <person name="Takahashi H."/>
            <person name="Takeda J."/>
            <person name="Takemoto K."/>
            <person name="Uehara K."/>
            <person name="Wada C."/>
            <person name="Yamagata S."/>
            <person name="Horiuchi T."/>
        </authorList>
    </citation>
    <scope>NUCLEOTIDE SEQUENCE [LARGE SCALE GENOMIC DNA]</scope>
    <source>
        <strain>K12 / W3110 / ATCC 27325 / DSM 5911</strain>
    </source>
</reference>
<reference key="3">
    <citation type="journal article" date="1997" name="Science">
        <title>The complete genome sequence of Escherichia coli K-12.</title>
        <authorList>
            <person name="Blattner F.R."/>
            <person name="Plunkett G. III"/>
            <person name="Bloch C.A."/>
            <person name="Perna N.T."/>
            <person name="Burland V."/>
            <person name="Riley M."/>
            <person name="Collado-Vides J."/>
            <person name="Glasner J.D."/>
            <person name="Rode C.K."/>
            <person name="Mayhew G.F."/>
            <person name="Gregor J."/>
            <person name="Davis N.W."/>
            <person name="Kirkpatrick H.A."/>
            <person name="Goeden M.A."/>
            <person name="Rose D.J."/>
            <person name="Mau B."/>
            <person name="Shao Y."/>
        </authorList>
    </citation>
    <scope>NUCLEOTIDE SEQUENCE [LARGE SCALE GENOMIC DNA]</scope>
    <source>
        <strain>K12 / MG1655 / ATCC 47076</strain>
    </source>
</reference>
<reference key="4">
    <citation type="journal article" date="2006" name="Mol. Syst. Biol.">
        <title>Highly accurate genome sequences of Escherichia coli K-12 strains MG1655 and W3110.</title>
        <authorList>
            <person name="Hayashi K."/>
            <person name="Morooka N."/>
            <person name="Yamamoto Y."/>
            <person name="Fujita K."/>
            <person name="Isono K."/>
            <person name="Choi S."/>
            <person name="Ohtsubo E."/>
            <person name="Baba T."/>
            <person name="Wanner B.L."/>
            <person name="Mori H."/>
            <person name="Horiuchi T."/>
        </authorList>
    </citation>
    <scope>NUCLEOTIDE SEQUENCE [LARGE SCALE GENOMIC DNA]</scope>
    <source>
        <strain>K12 / W3110 / ATCC 27325 / DSM 5911</strain>
    </source>
</reference>
<reference key="5">
    <citation type="journal article" date="1988" name="Mol. Microbiol.">
        <title>Nucleotide sequencing and expression of the fadL gene involved in long-chain fatty acid transport in Escherichia coli.</title>
        <authorList>
            <person name="Said B."/>
            <person name="Ghosn C.R."/>
            <person name="Vu L."/>
            <person name="Nunn W."/>
        </authorList>
    </citation>
    <scope>NUCLEOTIDE SEQUENCE [GENOMIC DNA] OF 64-446</scope>
    <source>
        <strain>K12</strain>
    </source>
</reference>
<reference key="6">
    <citation type="journal article" date="2005" name="J. Biol. Chem.">
        <title>Protein complexes of the Escherichia coli cell envelope.</title>
        <authorList>
            <person name="Stenberg F."/>
            <person name="Chovanec P."/>
            <person name="Maslen S.L."/>
            <person name="Robinson C.V."/>
            <person name="Ilag L."/>
            <person name="von Heijne G."/>
            <person name="Daley D.O."/>
        </authorList>
    </citation>
    <scope>DIMERIZATION</scope>
    <scope>SUBCELLULAR LOCATION</scope>
    <source>
        <strain>BL21-DE3</strain>
    </source>
</reference>
<reference key="7">
    <citation type="journal article" date="2004" name="Science">
        <title>Crystal structure of the long-chain fatty acid transporter FadL.</title>
        <authorList>
            <person name="van den Berg B."/>
            <person name="Black P.N."/>
            <person name="Clemons W.M. Jr."/>
            <person name="Rapoport T.A."/>
        </authorList>
    </citation>
    <scope>X-RAY CRYSTALLOGRAPHY (2.6 ANGSTROMS) OF 26-446</scope>
</reference>
<dbReference type="EMBL" id="M60607">
    <property type="protein sequence ID" value="AAA64433.1"/>
    <property type="status" value="ALT_INIT"/>
    <property type="molecule type" value="Genomic_DNA"/>
</dbReference>
<dbReference type="EMBL" id="U00096">
    <property type="protein sequence ID" value="AAC75404.2"/>
    <property type="molecule type" value="Genomic_DNA"/>
</dbReference>
<dbReference type="EMBL" id="AP009048">
    <property type="protein sequence ID" value="BAA16205.1"/>
    <property type="status" value="ALT_INIT"/>
    <property type="molecule type" value="Genomic_DNA"/>
</dbReference>
<dbReference type="EMBL" id="Y00552">
    <property type="protein sequence ID" value="CAA68630.1"/>
    <property type="status" value="ALT_INIT"/>
    <property type="molecule type" value="Genomic_DNA"/>
</dbReference>
<dbReference type="PIR" id="F65007">
    <property type="entry name" value="F65007"/>
</dbReference>
<dbReference type="RefSeq" id="NP_416846.2">
    <property type="nucleotide sequence ID" value="NC_000913.3"/>
</dbReference>
<dbReference type="RefSeq" id="WP_001295701.1">
    <property type="nucleotide sequence ID" value="NZ_LN832404.1"/>
</dbReference>
<dbReference type="PDB" id="1T16">
    <property type="method" value="X-ray"/>
    <property type="resolution" value="2.60 A"/>
    <property type="chains" value="A/B=26-446"/>
</dbReference>
<dbReference type="PDB" id="1T1L">
    <property type="method" value="X-ray"/>
    <property type="resolution" value="2.80 A"/>
    <property type="chains" value="A/B=26-446"/>
</dbReference>
<dbReference type="PDB" id="2R4L">
    <property type="method" value="X-ray"/>
    <property type="resolution" value="3.30 A"/>
    <property type="chains" value="A/B/C=26-446"/>
</dbReference>
<dbReference type="PDB" id="2R4N">
    <property type="method" value="X-ray"/>
    <property type="resolution" value="3.20 A"/>
    <property type="chains" value="A/B=26-446"/>
</dbReference>
<dbReference type="PDB" id="2R4O">
    <property type="method" value="X-ray"/>
    <property type="resolution" value="3.60 A"/>
    <property type="chains" value="A/B=26-446"/>
</dbReference>
<dbReference type="PDB" id="2R4P">
    <property type="method" value="X-ray"/>
    <property type="resolution" value="2.90 A"/>
    <property type="chains" value="A/B=26-446"/>
</dbReference>
<dbReference type="PDB" id="2R88">
    <property type="method" value="X-ray"/>
    <property type="resolution" value="2.60 A"/>
    <property type="chains" value="A/B=26-446"/>
</dbReference>
<dbReference type="PDB" id="2R89">
    <property type="method" value="X-ray"/>
    <property type="resolution" value="3.40 A"/>
    <property type="chains" value="A/B=31-446"/>
</dbReference>
<dbReference type="PDB" id="2R8A">
    <property type="method" value="X-ray"/>
    <property type="resolution" value="3.00 A"/>
    <property type="chains" value="A/B=36-446"/>
</dbReference>
<dbReference type="PDB" id="3DWN">
    <property type="method" value="X-ray"/>
    <property type="resolution" value="2.50 A"/>
    <property type="chains" value="A/B=26-446"/>
</dbReference>
<dbReference type="PDB" id="3PF1">
    <property type="method" value="X-ray"/>
    <property type="resolution" value="2.70 A"/>
    <property type="chains" value="A/B=26-446"/>
</dbReference>
<dbReference type="PDB" id="3PGR">
    <property type="method" value="X-ray"/>
    <property type="resolution" value="2.60 A"/>
    <property type="chains" value="A=26-446"/>
</dbReference>
<dbReference type="PDB" id="3PGS">
    <property type="method" value="X-ray"/>
    <property type="resolution" value="1.90 A"/>
    <property type="chains" value="A/B=26-446"/>
</dbReference>
<dbReference type="PDB" id="3PGU">
    <property type="method" value="X-ray"/>
    <property type="resolution" value="1.70 A"/>
    <property type="chains" value="A=26-446"/>
</dbReference>
<dbReference type="PDBsum" id="1T16"/>
<dbReference type="PDBsum" id="1T1L"/>
<dbReference type="PDBsum" id="2R4L"/>
<dbReference type="PDBsum" id="2R4N"/>
<dbReference type="PDBsum" id="2R4O"/>
<dbReference type="PDBsum" id="2R4P"/>
<dbReference type="PDBsum" id="2R88"/>
<dbReference type="PDBsum" id="2R89"/>
<dbReference type="PDBsum" id="2R8A"/>
<dbReference type="PDBsum" id="3DWN"/>
<dbReference type="PDBsum" id="3PF1"/>
<dbReference type="PDBsum" id="3PGR"/>
<dbReference type="PDBsum" id="3PGS"/>
<dbReference type="PDBsum" id="3PGU"/>
<dbReference type="SMR" id="P10384"/>
<dbReference type="BioGRID" id="4260536">
    <property type="interactions" value="118"/>
</dbReference>
<dbReference type="FunCoup" id="P10384">
    <property type="interactions" value="77"/>
</dbReference>
<dbReference type="STRING" id="511145.b2344"/>
<dbReference type="ChEMBL" id="CHEMBL3309022"/>
<dbReference type="DrugBank" id="DB04233">
    <property type="generic name" value="(Hydroxyethyloxy)Tri(Ethyloxy)Octane"/>
</dbReference>
<dbReference type="DrugBank" id="DB04147">
    <property type="generic name" value="Dodecyldimethylamine N-oxide"/>
</dbReference>
<dbReference type="TCDB" id="1.B.9.1.1">
    <property type="family name" value="the fadl outer membrane protein (fadl) family"/>
</dbReference>
<dbReference type="jPOST" id="P10384"/>
<dbReference type="PaxDb" id="511145-b2344"/>
<dbReference type="EnsemblBacteria" id="AAC75404">
    <property type="protein sequence ID" value="AAC75404"/>
    <property type="gene ID" value="b2344"/>
</dbReference>
<dbReference type="GeneID" id="946820"/>
<dbReference type="KEGG" id="ecj:JW2341"/>
<dbReference type="KEGG" id="eco:b2344"/>
<dbReference type="KEGG" id="ecoc:C3026_13045"/>
<dbReference type="PATRIC" id="fig|1411691.4.peg.4388"/>
<dbReference type="EchoBASE" id="EB0276"/>
<dbReference type="eggNOG" id="COG2067">
    <property type="taxonomic scope" value="Bacteria"/>
</dbReference>
<dbReference type="HOGENOM" id="CLU_035981_0_0_6"/>
<dbReference type="InParanoid" id="P10384"/>
<dbReference type="OMA" id="WDDSWLF"/>
<dbReference type="OrthoDB" id="19849at2"/>
<dbReference type="PhylomeDB" id="P10384"/>
<dbReference type="BioCyc" id="EcoCyc:EG10280-MONOMER"/>
<dbReference type="BioCyc" id="MetaCyc:EG10280-MONOMER"/>
<dbReference type="EvolutionaryTrace" id="P10384"/>
<dbReference type="PRO" id="PR:P10384"/>
<dbReference type="Proteomes" id="UP000000625">
    <property type="component" value="Chromosome"/>
</dbReference>
<dbReference type="GO" id="GO:0009279">
    <property type="term" value="C:cell outer membrane"/>
    <property type="evidence" value="ECO:0000314"/>
    <property type="project" value="EcoCyc"/>
</dbReference>
<dbReference type="GO" id="GO:0022834">
    <property type="term" value="F:ligand-gated channel activity"/>
    <property type="evidence" value="ECO:0000314"/>
    <property type="project" value="EcoCyc"/>
</dbReference>
<dbReference type="GO" id="GO:0015483">
    <property type="term" value="F:long-chain fatty acid transporting porin activity"/>
    <property type="evidence" value="ECO:0000314"/>
    <property type="project" value="EcoCyc"/>
</dbReference>
<dbReference type="GO" id="GO:0015909">
    <property type="term" value="P:long-chain fatty acid transport"/>
    <property type="evidence" value="ECO:0000269"/>
    <property type="project" value="EcoCyc"/>
</dbReference>
<dbReference type="FunFam" id="2.40.160.60:FF:000001">
    <property type="entry name" value="Long-chain fatty acid transporter FadL"/>
    <property type="match status" value="1"/>
</dbReference>
<dbReference type="Gene3D" id="2.40.160.60">
    <property type="entry name" value="Outer membrane protein transport protein (OMPP1/FadL/TodX)"/>
    <property type="match status" value="1"/>
</dbReference>
<dbReference type="InterPro" id="IPR005017">
    <property type="entry name" value="OMPP1/FadL/TodX"/>
</dbReference>
<dbReference type="NCBIfam" id="NF007988">
    <property type="entry name" value="PRK10716.1"/>
    <property type="match status" value="1"/>
</dbReference>
<dbReference type="PANTHER" id="PTHR35093:SF3">
    <property type="entry name" value="LONG-CHAIN FATTY ACID TRANSPORT PROTEIN"/>
    <property type="match status" value="1"/>
</dbReference>
<dbReference type="PANTHER" id="PTHR35093">
    <property type="entry name" value="OUTER MEMBRANE PROTEIN NMB0088-RELATED"/>
    <property type="match status" value="1"/>
</dbReference>
<dbReference type="Pfam" id="PF03349">
    <property type="entry name" value="Toluene_X"/>
    <property type="match status" value="1"/>
</dbReference>
<dbReference type="SUPFAM" id="SSF56935">
    <property type="entry name" value="Porins"/>
    <property type="match status" value="1"/>
</dbReference>
<accession>P10384</accession>
<accession>P77697</accession>
<name>FADL_ECOLI</name>
<sequence length="446" mass="48542">MSQKTLFTKSALAVAVALISTQAWSAGFQLNEFSSSGLGRAYSGEGAIADDAGNVSRNPALITMFDRPTFSAGAVYIDPDVNISGTSPSGRSLKADNIAPTAWVPNMHFVAPINDQFGWGASITSNYGLATEFNDTYAGGSVGGTTDLETMNLNLSGAYRLNNAWSFGLGFNAVYARAKIERFAGDLGQLVAGQIMQSPAGQTQQGQALAATANGIDSNTKIAHLNGNQWGFGWNAGILYELDKNNRYALTYRSEVKIDFKGNYSSDLNRAFNNYGLPIPTATGGATQSGYLTLNLPEMWEVSGYNRVDPQWAIHYSLAYTSWSQFQQLKATSTSGDTLFQKHEGFKDAYRIALGTTYYYDDNWTFRTGIAFDDSPVPAQNRSISIPDQDRFWLSAGTTYAFNKDASVDVGVSYMHGQSVKINEGPYQFESEGKAWLFGTNFNYAF</sequence>
<keyword id="KW-0002">3D-structure</keyword>
<keyword id="KW-0998">Cell outer membrane</keyword>
<keyword id="KW-0903">Direct protein sequencing</keyword>
<keyword id="KW-0445">Lipid transport</keyword>
<keyword id="KW-0472">Membrane</keyword>
<keyword id="KW-1185">Reference proteome</keyword>
<keyword id="KW-0732">Signal</keyword>
<keyword id="KW-0812">Transmembrane</keyword>
<keyword id="KW-1134">Transmembrane beta strand</keyword>
<keyword id="KW-0813">Transport</keyword>
<protein>
    <recommendedName>
        <fullName>Long-chain fatty acid transport protein</fullName>
    </recommendedName>
    <alternativeName>
        <fullName>Outer membrane FadL protein</fullName>
    </alternativeName>
    <alternativeName>
        <fullName>Outer membrane flp protein</fullName>
    </alternativeName>
</protein>
<evidence type="ECO:0000269" key="1">
    <source>
    </source>
</evidence>
<evidence type="ECO:0000269" key="2">
    <source>
    </source>
</evidence>
<evidence type="ECO:0000305" key="3"/>
<evidence type="ECO:0007829" key="4">
    <source>
        <dbReference type="PDB" id="1T1L"/>
    </source>
</evidence>
<evidence type="ECO:0007829" key="5">
    <source>
        <dbReference type="PDB" id="2R4P"/>
    </source>
</evidence>
<evidence type="ECO:0007829" key="6">
    <source>
        <dbReference type="PDB" id="3PGS"/>
    </source>
</evidence>
<evidence type="ECO:0007829" key="7">
    <source>
        <dbReference type="PDB" id="3PGU"/>
    </source>
</evidence>
<gene>
    <name type="primary">fadL</name>
    <name type="synonym">ttr</name>
    <name type="ordered locus">b2344</name>
    <name type="ordered locus">JW2341</name>
</gene>
<proteinExistence type="evidence at protein level"/>
<comment type="function">
    <text>Involved in translocation of long-chain fatty acids across the outer membrane. It is a receptor for the bacteriophage T2. FadL may form a specific channel.</text>
</comment>
<comment type="subunit">
    <text>Has been isolated from outer membrane preparation as a homodimer.</text>
</comment>
<comment type="subcellular location">
    <subcellularLocation>
        <location evidence="1">Cell outer membrane</location>
        <topology evidence="1">Multi-pass membrane protein</topology>
    </subcellularLocation>
</comment>
<comment type="induction">
    <text>By long-chain fatty acids. Expression of fadL is under the control of the FadR repressor.</text>
</comment>
<comment type="similarity">
    <text evidence="3">Belongs to the OmpP1/FadL family.</text>
</comment>
<comment type="sequence caution" evidence="3">
    <conflict type="erroneous initiation">
        <sequence resource="EMBL-CDS" id="AAA64433"/>
    </conflict>
</comment>
<comment type="sequence caution" evidence="3">
    <conflict type="erroneous initiation">
        <sequence resource="EMBL-CDS" id="BAA16205"/>
    </conflict>
</comment>
<comment type="sequence caution" evidence="3">
    <conflict type="erroneous initiation">
        <sequence resource="EMBL-CDS" id="CAA68630"/>
    </conflict>
</comment>